<comment type="subunit">
    <text>The avian keratins (F-ker, S-ker, C-ker and B-ker) are a complex mixture of very similar polypeptides.</text>
</comment>
<comment type="similarity">
    <text evidence="1">Belongs to the avian keratin family.</text>
</comment>
<proteinExistence type="inferred from homology"/>
<reference key="1">
    <citation type="journal article" date="1989" name="J. Mol. Biol.">
        <title>Avian keratin genes. I. A molecular analysis of the structure and expression of a group of feather keratin genes.</title>
        <authorList>
            <person name="Presland R.B."/>
            <person name="Gregg K."/>
            <person name="Molloy P.L."/>
            <person name="Morris C.P."/>
            <person name="Crocker L.A."/>
            <person name="Rogers G.E."/>
        </authorList>
    </citation>
    <scope>NUCLEOTIDE SEQUENCE [GENOMIC DNA]</scope>
</reference>
<protein>
    <recommendedName>
        <fullName>Feather keratin 3</fullName>
    </recommendedName>
    <alternativeName>
        <fullName>F-ker</fullName>
    </alternativeName>
    <alternativeName>
        <fullName>Keratin gene D protein</fullName>
    </alternativeName>
</protein>
<sequence>MSCFDLCRPCGPTPLANSCNEACVRQCQDSRVVIQPSPVVVTLPGPILSSFPQNTLVGSSTSAAVGSILSEEGVPISSGGFGISGLGSRFSGRRCLPC</sequence>
<accession>P20307</accession>
<evidence type="ECO:0000305" key="1"/>
<feature type="initiator methionine" description="Removed">
    <location>
        <position position="1"/>
    </location>
</feature>
<feature type="chain" id="PRO_0000097000" description="Feather keratin 3">
    <location>
        <begin position="2"/>
        <end position="98"/>
    </location>
</feature>
<keyword id="KW-0416">Keratin</keyword>
<keyword id="KW-1185">Reference proteome</keyword>
<name>KRFD_CHICK</name>
<dbReference type="EMBL" id="X17509">
    <property type="protein sequence ID" value="CAA35555.1"/>
    <property type="molecule type" value="Genomic_DNA"/>
</dbReference>
<dbReference type="PIR" id="S06806">
    <property type="entry name" value="S06806"/>
</dbReference>
<dbReference type="GlyGen" id="P20307">
    <property type="glycosylation" value="1 site"/>
</dbReference>
<dbReference type="VEuPathDB" id="HostDB:LOC428291"/>
<dbReference type="eggNOG" id="ENOG502TDE8">
    <property type="taxonomic scope" value="Eukaryota"/>
</dbReference>
<dbReference type="InParanoid" id="P20307"/>
<dbReference type="PhylomeDB" id="P20307"/>
<dbReference type="Proteomes" id="UP000000539">
    <property type="component" value="Unassembled WGS sequence"/>
</dbReference>
<dbReference type="GO" id="GO:0005882">
    <property type="term" value="C:intermediate filament"/>
    <property type="evidence" value="ECO:0007669"/>
    <property type="project" value="UniProtKB-KW"/>
</dbReference>
<dbReference type="GO" id="GO:0005200">
    <property type="term" value="F:structural constituent of cytoskeleton"/>
    <property type="evidence" value="ECO:0007669"/>
    <property type="project" value="InterPro"/>
</dbReference>
<dbReference type="InterPro" id="IPR003461">
    <property type="entry name" value="Keratin"/>
</dbReference>
<dbReference type="PANTHER" id="PTHR31203">
    <property type="entry name" value="BETA-KERATIN-RELATED PROTEIN-RELATED"/>
    <property type="match status" value="1"/>
</dbReference>
<dbReference type="PANTHER" id="PTHR31203:SF1">
    <property type="entry name" value="BETA-KERATIN-RELATED PROTEIN-RELATED"/>
    <property type="match status" value="1"/>
</dbReference>
<dbReference type="Pfam" id="PF02422">
    <property type="entry name" value="Keratin"/>
    <property type="match status" value="1"/>
</dbReference>
<organism>
    <name type="scientific">Gallus gallus</name>
    <name type="common">Chicken</name>
    <dbReference type="NCBI Taxonomy" id="9031"/>
    <lineage>
        <taxon>Eukaryota</taxon>
        <taxon>Metazoa</taxon>
        <taxon>Chordata</taxon>
        <taxon>Craniata</taxon>
        <taxon>Vertebrata</taxon>
        <taxon>Euteleostomi</taxon>
        <taxon>Archelosauria</taxon>
        <taxon>Archosauria</taxon>
        <taxon>Dinosauria</taxon>
        <taxon>Saurischia</taxon>
        <taxon>Theropoda</taxon>
        <taxon>Coelurosauria</taxon>
        <taxon>Aves</taxon>
        <taxon>Neognathae</taxon>
        <taxon>Galloanserae</taxon>
        <taxon>Galliformes</taxon>
        <taxon>Phasianidae</taxon>
        <taxon>Phasianinae</taxon>
        <taxon>Gallus</taxon>
    </lineage>
</organism>